<name>OBG_BACSU</name>
<accession>P20964</accession>
<comment type="function">
    <text evidence="5 10 12 13 14">Necessary for the transition from vegetative growth to stage 0 or stage II of sporulation, but sporulation subsequent to these stages is unaffected at 45 degrees Celsius. This ts effect is probably due solely to the E-79 mutation. Required for expression of early sporulation genes, further suggesting a role in the induction of sporulation. Depletion effects on sporulation can be partially suppressed by missense mutations in spo0A. Strains depleted for obg stop growing after about 3 hours and do not induce the sigma-B factor following ethanol stress. It cofractionates with the ribosome and upstream stress response regulators RsbR, RsbS and RsbT in size fractionation columns, suggesting the ribosome might serve as a possible mediator of the activity of obg and the stress induction of sigma-B. In glycerol gradients partially associates with ribosomes; this is stabilized by a nonhydrolyzable GTP-analog and to a lesser extent GTP and GDP.</text>
</comment>
<comment type="function">
    <text evidence="1">An essential GTPase which binds GTP, GDP and possibly (p)ppGpp with moderate affinity, with high nucleotide exchange rates and a fairly low GTP hydrolysis rate. Plays a role in control of the cell cycle, stress response, ribosome biogenesis and in those bacteria that undergo differentiation, in morphogenesis control.</text>
</comment>
<comment type="cofactor">
    <cofactor evidence="1 16">
        <name>Mg(2+)</name>
        <dbReference type="ChEBI" id="CHEBI:18420"/>
    </cofactor>
</comment>
<comment type="activity regulation">
    <text evidence="8 14">Inhibited by GDP; less than 20 uM ppGpp stimulates the GTPase, while higher concentrations inhibit.</text>
</comment>
<comment type="biophysicochemical properties">
    <kinetics>
        <KM evidence="14">5.4 uM for GTP</KM>
        <Vmax evidence="14">127.0 pmol/min/mg enzyme</Vmax>
        <text>Turnover number of 0.0061/min.</text>
    </kinetics>
</comment>
<comment type="subunit">
    <text evidence="1 8 14">Monomer. Interacts with TasA (AC P54507) in pull-down experiments.</text>
</comment>
<comment type="subcellular location">
    <subcellularLocation>
        <location evidence="1 6">Cytoplasm</location>
    </subcellularLocation>
    <text evidence="6 9">Cofractionates with the ribosome and stress response regulators RsbR, RsbS and RsbT in size fractionation columns; binds to ribosomal protein L13.</text>
</comment>
<comment type="induction">
    <text evidence="11">Part of an operon with spo0B.</text>
</comment>
<comment type="domain">
    <text evidence="10">A mutant in the N-terminal obg domain (Asp-92) impairs growth and ribosome association but has no effect on sporulation or the general stress regulon (GSR). Replacing the last 22 amino acids has no effect on growth or ribosome association, but eliminates sporulation and reduces the GSR, showing for the first time that growth promotion and the GSR phenotypes are separable.</text>
</comment>
<comment type="disruption phenotype">
    <text evidence="7 11">Essential for growth, it cannot be disrupted. In depletion experiments cells become over 3-fold longer, are abnormally curved and nucleoids condense.</text>
</comment>
<comment type="miscellaneous">
    <text evidence="7">Estimated to be present at 6000 copies per cell.</text>
</comment>
<comment type="similarity">
    <text evidence="1">Belongs to the TRAFAC class OBG-HflX-like GTPase superfamily. OBG GTPase family.</text>
</comment>
<keyword id="KW-0002">3D-structure</keyword>
<keyword id="KW-0963">Cytoplasm</keyword>
<keyword id="KW-0342">GTP-binding</keyword>
<keyword id="KW-0378">Hydrolase</keyword>
<keyword id="KW-0460">Magnesium</keyword>
<keyword id="KW-0479">Metal-binding</keyword>
<keyword id="KW-0547">Nucleotide-binding</keyword>
<keyword id="KW-1185">Reference proteome</keyword>
<keyword id="KW-0749">Sporulation</keyword>
<gene>
    <name evidence="1" type="primary">obg</name>
    <name type="ordered locus">BSU27920</name>
</gene>
<proteinExistence type="evidence at protein level"/>
<protein>
    <recommendedName>
        <fullName evidence="1">GTPase Obg</fullName>
        <ecNumber evidence="1 14">3.6.5.-</ecNumber>
    </recommendedName>
    <alternativeName>
        <fullName evidence="1 15">GTP-binding protein Obg</fullName>
    </alternativeName>
    <alternativeName>
        <fullName>OrfA</fullName>
    </alternativeName>
    <alternativeName>
        <fullName>Spo0B-associated GTP-binding protein</fullName>
    </alternativeName>
</protein>
<dbReference type="EC" id="3.6.5.-" evidence="1 14"/>
<dbReference type="EMBL" id="M24537">
    <property type="protein sequence ID" value="AAA22505.1"/>
    <property type="molecule type" value="Genomic_DNA"/>
</dbReference>
<dbReference type="EMBL" id="AL009126">
    <property type="protein sequence ID" value="CAB14752.1"/>
    <property type="molecule type" value="Genomic_DNA"/>
</dbReference>
<dbReference type="EMBL" id="X02655">
    <property type="protein sequence ID" value="CAA26490.1"/>
    <property type="molecule type" value="Genomic_DNA"/>
</dbReference>
<dbReference type="PIR" id="B32804">
    <property type="entry name" value="B32804"/>
</dbReference>
<dbReference type="PDB" id="1LNZ">
    <property type="method" value="X-ray"/>
    <property type="resolution" value="2.60 A"/>
    <property type="chains" value="A/B=1-342"/>
</dbReference>
<dbReference type="PDBsum" id="1LNZ"/>
<dbReference type="SMR" id="P20964"/>
<dbReference type="FunCoup" id="P20964">
    <property type="interactions" value="608"/>
</dbReference>
<dbReference type="IntAct" id="P20964">
    <property type="interactions" value="1"/>
</dbReference>
<dbReference type="MINT" id="P20964"/>
<dbReference type="STRING" id="224308.BSU27920"/>
<dbReference type="DrugBank" id="DB04022">
    <property type="generic name" value="Guanosine tetraphosphate"/>
</dbReference>
<dbReference type="jPOST" id="P20964"/>
<dbReference type="PaxDb" id="224308-BSU27920"/>
<dbReference type="EnsemblBacteria" id="CAB14752">
    <property type="protein sequence ID" value="CAB14752"/>
    <property type="gene ID" value="BSU_27920"/>
</dbReference>
<dbReference type="GeneID" id="937502"/>
<dbReference type="KEGG" id="bsu:BSU27920"/>
<dbReference type="PATRIC" id="fig|224308.179.peg.3033"/>
<dbReference type="eggNOG" id="COG0536">
    <property type="taxonomic scope" value="Bacteria"/>
</dbReference>
<dbReference type="InParanoid" id="P20964"/>
<dbReference type="OrthoDB" id="9807318at2"/>
<dbReference type="PhylomeDB" id="P20964"/>
<dbReference type="BioCyc" id="BSUB:BSU27920-MONOMER"/>
<dbReference type="EvolutionaryTrace" id="P20964"/>
<dbReference type="Proteomes" id="UP000001570">
    <property type="component" value="Chromosome"/>
</dbReference>
<dbReference type="GO" id="GO:0005737">
    <property type="term" value="C:cytoplasm"/>
    <property type="evidence" value="ECO:0007669"/>
    <property type="project" value="UniProtKB-SubCell"/>
</dbReference>
<dbReference type="GO" id="GO:0005525">
    <property type="term" value="F:GTP binding"/>
    <property type="evidence" value="ECO:0000318"/>
    <property type="project" value="GO_Central"/>
</dbReference>
<dbReference type="GO" id="GO:0003924">
    <property type="term" value="F:GTPase activity"/>
    <property type="evidence" value="ECO:0000318"/>
    <property type="project" value="GO_Central"/>
</dbReference>
<dbReference type="GO" id="GO:0000287">
    <property type="term" value="F:magnesium ion binding"/>
    <property type="evidence" value="ECO:0007669"/>
    <property type="project" value="InterPro"/>
</dbReference>
<dbReference type="GO" id="GO:0042254">
    <property type="term" value="P:ribosome biogenesis"/>
    <property type="evidence" value="ECO:0007669"/>
    <property type="project" value="UniProtKB-UniRule"/>
</dbReference>
<dbReference type="GO" id="GO:0030435">
    <property type="term" value="P:sporulation resulting in formation of a cellular spore"/>
    <property type="evidence" value="ECO:0007669"/>
    <property type="project" value="UniProtKB-KW"/>
</dbReference>
<dbReference type="CDD" id="cd01898">
    <property type="entry name" value="Obg"/>
    <property type="match status" value="1"/>
</dbReference>
<dbReference type="FunFam" id="2.70.210.12:FF:000001">
    <property type="entry name" value="GTPase Obg"/>
    <property type="match status" value="1"/>
</dbReference>
<dbReference type="FunFam" id="3.40.50.300:FF:000515">
    <property type="entry name" value="GTPase Obg"/>
    <property type="match status" value="1"/>
</dbReference>
<dbReference type="Gene3D" id="3.30.300.350">
    <property type="entry name" value="GTP-binding protein OBG, C-terminal domain"/>
    <property type="match status" value="1"/>
</dbReference>
<dbReference type="Gene3D" id="2.70.210.12">
    <property type="entry name" value="GTP1/OBG domain"/>
    <property type="match status" value="1"/>
</dbReference>
<dbReference type="Gene3D" id="3.40.50.300">
    <property type="entry name" value="P-loop containing nucleotide triphosphate hydrolases"/>
    <property type="match status" value="1"/>
</dbReference>
<dbReference type="HAMAP" id="MF_01454">
    <property type="entry name" value="GTPase_Obg"/>
    <property type="match status" value="1"/>
</dbReference>
<dbReference type="InterPro" id="IPR031167">
    <property type="entry name" value="G_OBG"/>
</dbReference>
<dbReference type="InterPro" id="IPR006073">
    <property type="entry name" value="GTP-bd"/>
</dbReference>
<dbReference type="InterPro" id="IPR014100">
    <property type="entry name" value="GTP-bd_Obg/CgtA"/>
</dbReference>
<dbReference type="InterPro" id="IPR036346">
    <property type="entry name" value="GTP-bd_prot_GTP1/OBG_C_sf"/>
</dbReference>
<dbReference type="InterPro" id="IPR006074">
    <property type="entry name" value="GTP1-OBG_CS"/>
</dbReference>
<dbReference type="InterPro" id="IPR006169">
    <property type="entry name" value="GTP1_OBG_dom"/>
</dbReference>
<dbReference type="InterPro" id="IPR036726">
    <property type="entry name" value="GTP1_OBG_dom_sf"/>
</dbReference>
<dbReference type="InterPro" id="IPR045086">
    <property type="entry name" value="OBG_GTPase"/>
</dbReference>
<dbReference type="InterPro" id="IPR015349">
    <property type="entry name" value="OCT_dom"/>
</dbReference>
<dbReference type="InterPro" id="IPR027417">
    <property type="entry name" value="P-loop_NTPase"/>
</dbReference>
<dbReference type="InterPro" id="IPR005225">
    <property type="entry name" value="Small_GTP-bd"/>
</dbReference>
<dbReference type="NCBIfam" id="TIGR02729">
    <property type="entry name" value="Obg_CgtA"/>
    <property type="match status" value="1"/>
</dbReference>
<dbReference type="NCBIfam" id="TIGR03595">
    <property type="entry name" value="Obg_CgtA_exten"/>
    <property type="match status" value="1"/>
</dbReference>
<dbReference type="NCBIfam" id="NF008954">
    <property type="entry name" value="PRK12296.1"/>
    <property type="match status" value="1"/>
</dbReference>
<dbReference type="NCBIfam" id="NF008955">
    <property type="entry name" value="PRK12297.1"/>
    <property type="match status" value="1"/>
</dbReference>
<dbReference type="NCBIfam" id="NF008956">
    <property type="entry name" value="PRK12299.1"/>
    <property type="match status" value="1"/>
</dbReference>
<dbReference type="NCBIfam" id="TIGR00231">
    <property type="entry name" value="small_GTP"/>
    <property type="match status" value="1"/>
</dbReference>
<dbReference type="PANTHER" id="PTHR11702">
    <property type="entry name" value="DEVELOPMENTALLY REGULATED GTP-BINDING PROTEIN-RELATED"/>
    <property type="match status" value="1"/>
</dbReference>
<dbReference type="PANTHER" id="PTHR11702:SF31">
    <property type="entry name" value="MITOCHONDRIAL RIBOSOME-ASSOCIATED GTPASE 2"/>
    <property type="match status" value="1"/>
</dbReference>
<dbReference type="Pfam" id="PF09269">
    <property type="entry name" value="DUF1967"/>
    <property type="match status" value="1"/>
</dbReference>
<dbReference type="Pfam" id="PF01018">
    <property type="entry name" value="GTP1_OBG"/>
    <property type="match status" value="1"/>
</dbReference>
<dbReference type="Pfam" id="PF01926">
    <property type="entry name" value="MMR_HSR1"/>
    <property type="match status" value="1"/>
</dbReference>
<dbReference type="PIRSF" id="PIRSF002401">
    <property type="entry name" value="GTP_bd_Obg/CgtA"/>
    <property type="match status" value="1"/>
</dbReference>
<dbReference type="PRINTS" id="PR00326">
    <property type="entry name" value="GTP1OBG"/>
</dbReference>
<dbReference type="SUPFAM" id="SSF102741">
    <property type="entry name" value="Obg GTP-binding protein C-terminal domain"/>
    <property type="match status" value="1"/>
</dbReference>
<dbReference type="SUPFAM" id="SSF82051">
    <property type="entry name" value="Obg GTP-binding protein N-terminal domain"/>
    <property type="match status" value="1"/>
</dbReference>
<dbReference type="SUPFAM" id="SSF52540">
    <property type="entry name" value="P-loop containing nucleoside triphosphate hydrolases"/>
    <property type="match status" value="1"/>
</dbReference>
<dbReference type="PROSITE" id="PS51710">
    <property type="entry name" value="G_OBG"/>
    <property type="match status" value="1"/>
</dbReference>
<dbReference type="PROSITE" id="PS00905">
    <property type="entry name" value="GTP1_OBG"/>
    <property type="match status" value="1"/>
</dbReference>
<dbReference type="PROSITE" id="PS51883">
    <property type="entry name" value="OBG"/>
    <property type="match status" value="1"/>
</dbReference>
<dbReference type="PROSITE" id="PS51881">
    <property type="entry name" value="OCT"/>
    <property type="match status" value="1"/>
</dbReference>
<organism>
    <name type="scientific">Bacillus subtilis (strain 168)</name>
    <dbReference type="NCBI Taxonomy" id="224308"/>
    <lineage>
        <taxon>Bacteria</taxon>
        <taxon>Bacillati</taxon>
        <taxon>Bacillota</taxon>
        <taxon>Bacilli</taxon>
        <taxon>Bacillales</taxon>
        <taxon>Bacillaceae</taxon>
        <taxon>Bacillus</taxon>
    </lineage>
</organism>
<reference key="1">
    <citation type="journal article" date="1989" name="J. Bacteriol.">
        <title>The Bacillus subtilis spo0B stage 0 sporulation operon encodes an essential GTP-binding protein.</title>
        <authorList>
            <person name="Trach K."/>
            <person name="Hoch J.A."/>
        </authorList>
    </citation>
    <scope>NUCLEOTIDE SEQUENCE [GENOMIC DNA]</scope>
    <scope>GTP-BINDING</scope>
    <scope>OPERON STRUCTURE</scope>
    <scope>DISRUPTION PHENOTYPE</scope>
    <source>
        <strain>168</strain>
    </source>
</reference>
<reference key="2">
    <citation type="journal article" date="1997" name="Nature">
        <title>The complete genome sequence of the Gram-positive bacterium Bacillus subtilis.</title>
        <authorList>
            <person name="Kunst F."/>
            <person name="Ogasawara N."/>
            <person name="Moszer I."/>
            <person name="Albertini A.M."/>
            <person name="Alloni G."/>
            <person name="Azevedo V."/>
            <person name="Bertero M.G."/>
            <person name="Bessieres P."/>
            <person name="Bolotin A."/>
            <person name="Borchert S."/>
            <person name="Borriss R."/>
            <person name="Boursier L."/>
            <person name="Brans A."/>
            <person name="Braun M."/>
            <person name="Brignell S.C."/>
            <person name="Bron S."/>
            <person name="Brouillet S."/>
            <person name="Bruschi C.V."/>
            <person name="Caldwell B."/>
            <person name="Capuano V."/>
            <person name="Carter N.M."/>
            <person name="Choi S.-K."/>
            <person name="Codani J.-J."/>
            <person name="Connerton I.F."/>
            <person name="Cummings N.J."/>
            <person name="Daniel R.A."/>
            <person name="Denizot F."/>
            <person name="Devine K.M."/>
            <person name="Duesterhoeft A."/>
            <person name="Ehrlich S.D."/>
            <person name="Emmerson P.T."/>
            <person name="Entian K.-D."/>
            <person name="Errington J."/>
            <person name="Fabret C."/>
            <person name="Ferrari E."/>
            <person name="Foulger D."/>
            <person name="Fritz C."/>
            <person name="Fujita M."/>
            <person name="Fujita Y."/>
            <person name="Fuma S."/>
            <person name="Galizzi A."/>
            <person name="Galleron N."/>
            <person name="Ghim S.-Y."/>
            <person name="Glaser P."/>
            <person name="Goffeau A."/>
            <person name="Golightly E.J."/>
            <person name="Grandi G."/>
            <person name="Guiseppi G."/>
            <person name="Guy B.J."/>
            <person name="Haga K."/>
            <person name="Haiech J."/>
            <person name="Harwood C.R."/>
            <person name="Henaut A."/>
            <person name="Hilbert H."/>
            <person name="Holsappel S."/>
            <person name="Hosono S."/>
            <person name="Hullo M.-F."/>
            <person name="Itaya M."/>
            <person name="Jones L.-M."/>
            <person name="Joris B."/>
            <person name="Karamata D."/>
            <person name="Kasahara Y."/>
            <person name="Klaerr-Blanchard M."/>
            <person name="Klein C."/>
            <person name="Kobayashi Y."/>
            <person name="Koetter P."/>
            <person name="Koningstein G."/>
            <person name="Krogh S."/>
            <person name="Kumano M."/>
            <person name="Kurita K."/>
            <person name="Lapidus A."/>
            <person name="Lardinois S."/>
            <person name="Lauber J."/>
            <person name="Lazarevic V."/>
            <person name="Lee S.-M."/>
            <person name="Levine A."/>
            <person name="Liu H."/>
            <person name="Masuda S."/>
            <person name="Mauel C."/>
            <person name="Medigue C."/>
            <person name="Medina N."/>
            <person name="Mellado R.P."/>
            <person name="Mizuno M."/>
            <person name="Moestl D."/>
            <person name="Nakai S."/>
            <person name="Noback M."/>
            <person name="Noone D."/>
            <person name="O'Reilly M."/>
            <person name="Ogawa K."/>
            <person name="Ogiwara A."/>
            <person name="Oudega B."/>
            <person name="Park S.-H."/>
            <person name="Parro V."/>
            <person name="Pohl T.M."/>
            <person name="Portetelle D."/>
            <person name="Porwollik S."/>
            <person name="Prescott A.M."/>
            <person name="Presecan E."/>
            <person name="Pujic P."/>
            <person name="Purnelle B."/>
            <person name="Rapoport G."/>
            <person name="Rey M."/>
            <person name="Reynolds S."/>
            <person name="Rieger M."/>
            <person name="Rivolta C."/>
            <person name="Rocha E."/>
            <person name="Roche B."/>
            <person name="Rose M."/>
            <person name="Sadaie Y."/>
            <person name="Sato T."/>
            <person name="Scanlan E."/>
            <person name="Schleich S."/>
            <person name="Schroeter R."/>
            <person name="Scoffone F."/>
            <person name="Sekiguchi J."/>
            <person name="Sekowska A."/>
            <person name="Seror S.J."/>
            <person name="Serror P."/>
            <person name="Shin B.-S."/>
            <person name="Soldo B."/>
            <person name="Sorokin A."/>
            <person name="Tacconi E."/>
            <person name="Takagi T."/>
            <person name="Takahashi H."/>
            <person name="Takemaru K."/>
            <person name="Takeuchi M."/>
            <person name="Tamakoshi A."/>
            <person name="Tanaka T."/>
            <person name="Terpstra P."/>
            <person name="Tognoni A."/>
            <person name="Tosato V."/>
            <person name="Uchiyama S."/>
            <person name="Vandenbol M."/>
            <person name="Vannier F."/>
            <person name="Vassarotti A."/>
            <person name="Viari A."/>
            <person name="Wambutt R."/>
            <person name="Wedler E."/>
            <person name="Wedler H."/>
            <person name="Weitzenegger T."/>
            <person name="Winters P."/>
            <person name="Wipat A."/>
            <person name="Yamamoto H."/>
            <person name="Yamane K."/>
            <person name="Yasumoto K."/>
            <person name="Yata K."/>
            <person name="Yoshida K."/>
            <person name="Yoshikawa H.-F."/>
            <person name="Zumstein E."/>
            <person name="Yoshikawa H."/>
            <person name="Danchin A."/>
        </authorList>
    </citation>
    <scope>NUCLEOTIDE SEQUENCE [LARGE SCALE GENOMIC DNA]</scope>
    <source>
        <strain>168</strain>
    </source>
</reference>
<reference key="3">
    <citation type="journal article" date="1985" name="J. Bacteriol.">
        <title>Sequence analysis of the spo0B locus reveals a polycistronic transcription unit.</title>
        <authorList>
            <person name="Ferrari F.A."/>
            <person name="Trach K.A."/>
            <person name="Hoch J.A."/>
        </authorList>
    </citation>
    <scope>NUCLEOTIDE SEQUENCE [GENOMIC DNA] OF 1-65</scope>
    <source>
        <strain>168</strain>
    </source>
</reference>
<reference key="4">
    <citation type="journal article" date="1994" name="J. Bacteriol.">
        <title>Effects on Bacillus subtilis of a conditional lethal mutation in the essential GTP-binding protein Obg.</title>
        <authorList>
            <person name="Kok J."/>
            <person name="Trach K.A."/>
            <person name="Hoch J.A."/>
        </authorList>
    </citation>
    <scope>FUNCTION</scope>
    <scope>MUTAGENESIS OF 79-GLY--ASP-84</scope>
    <source>
        <strain>168 / JH642</strain>
    </source>
</reference>
<reference key="5">
    <citation type="journal article" date="1994" name="J. Bacteriol.">
        <title>Biochemical characterization of the essential GTP-binding protein Obg of Bacillus subtilis.</title>
        <authorList>
            <person name="Welsh K.M."/>
            <person name="Trach K.A."/>
            <person name="Folger C."/>
            <person name="Hoch J.A."/>
        </authorList>
    </citation>
    <scope>BIOPHYSICOCHEMICAL PROPERTIES</scope>
    <scope>SUBUNIT</scope>
    <scope>GTP-BINDING</scope>
    <scope>GTPASE ACTIVITY</scope>
    <scope>POSSIBLE COFACTOR</scope>
    <scope>ACTIVITY REGULATION</scope>
    <source>
        <strain>168</strain>
    </source>
</reference>
<reference key="6">
    <citation type="journal article" date="1995" name="J. Bacteriol.">
        <title>Possible role for the essential GTP-binding protein Obg in regulating the initiation of sporulation in Bacillus subtilis.</title>
        <authorList>
            <person name="Vidwans S.J."/>
            <person name="Ireton K."/>
            <person name="Grossman A.D."/>
        </authorList>
    </citation>
    <scope>POSSIBLE FUNCTION IN SPORULATION</scope>
    <source>
        <strain>168 / JH642</strain>
    </source>
</reference>
<reference key="7">
    <citation type="journal article" date="1999" name="J. Bacteriol.">
        <title>Obg, an essential GTP binding protein of Bacillus subtilis, is necessary for stress activation of transcription factor sigma(B).</title>
        <authorList>
            <person name="Scott J.M."/>
            <person name="Haldenwang W.G."/>
        </authorList>
    </citation>
    <scope>FUNCTION IN STRESS RESPONSE</scope>
    <source>
        <strain>PY22</strain>
    </source>
</reference>
<reference key="8">
    <citation type="journal article" date="2000" name="J. Bacteriol.">
        <title>The Bacillus subtilis GTP binding protein obg and regulators of the sigma(B) stress response transcription factor cofractionate with ribosomes.</title>
        <authorList>
            <person name="Scott J.M."/>
            <person name="Ju J."/>
            <person name="Mitchell T."/>
            <person name="Haldenwang W.G."/>
        </authorList>
    </citation>
    <scope>SUBCELLULAR LOCATION</scope>
    <scope>RIBOSOMAL ASSOCIATION</scope>
    <scope>BINDING TO L13</scope>
    <source>
        <strain>PY22</strain>
    </source>
</reference>
<reference key="9">
    <citation type="journal article" date="2002" name="Microbiology">
        <title>Six GTP-binding proteins of the Era/Obg family are essential for cell growth in Bacillus subtilis.</title>
        <authorList>
            <person name="Morimoto T."/>
            <person name="Loh P.C."/>
            <person name="Hirai T."/>
            <person name="Asai K."/>
            <person name="Kobayashi K."/>
            <person name="Moriya S."/>
            <person name="Ogasawara N."/>
        </authorList>
    </citation>
    <scope>PROTEIN LEVELS</scope>
    <scope>DISRUPTION PHENOTYPE</scope>
    <source>
        <strain>CRK6000</strain>
    </source>
</reference>
<reference key="10">
    <citation type="journal article" date="2004" name="Biochem. Biophys. Res. Commun.">
        <title>Guanine nucleotides stabilize the binding of Bacillus subtilis Obg to ribosomes.</title>
        <authorList>
            <person name="Zhang S."/>
            <person name="Haldenwang W.G."/>
        </authorList>
    </citation>
    <scope>RIBOSOMAL ASSOCIATION</scope>
    <source>
        <strain>PY22</strain>
    </source>
</reference>
<reference key="11">
    <citation type="journal article" date="2008" name="J. Bacteriol.">
        <title>The growth-promoting and stress response activities of the Bacillus subtilis GTP binding protein Obg are separable by mutation.</title>
        <authorList>
            <person name="Kuo S."/>
            <person name="Demeler B."/>
            <person name="Haldenwang W.G."/>
        </authorList>
    </citation>
    <scope>FUNCTION</scope>
    <scope>DOMAIN</scope>
    <scope>MUTAGENESIS OF GLY-92 AND 407-ARG--ASP-428</scope>
    <source>
        <strain>168 / BSA46</strain>
    </source>
</reference>
<reference key="12">
    <citation type="journal article" date="2010" name="PLoS ONE">
        <title>Molecular modeling study for interaction between Bacillus subtilis Obg and nucleotides.</title>
        <authorList>
            <person name="Lee Y."/>
            <person name="Bang W.Y."/>
            <person name="Kim S."/>
            <person name="Lazar P."/>
            <person name="Kim C.W."/>
            <person name="Bahk J.D."/>
            <person name="Lee K.W."/>
        </authorList>
    </citation>
    <scope>MOLECULAR DYNAMIC SIMULATIONS</scope>
</reference>
<reference key="13">
    <citation type="journal article" date="2002" name="Structure">
        <title>Structural and biochemical analysis of the Obg GTP binding protein.</title>
        <authorList>
            <person name="Buglino J."/>
            <person name="Shen V."/>
            <person name="Hakimian P."/>
            <person name="Lima C.D."/>
        </authorList>
    </citation>
    <scope>X-RAY CRYSTALLOGRAPHY (2.6 ANGSTROMS) OF 1-342 BOUND OR NOT BOUND TO NUCLEOTIDE</scope>
    <scope>ACTIVITY REGULATION BY PPGPP</scope>
    <scope>SUBUNIT</scope>
    <scope>POSSIBLE INTERACTION WITH TASA</scope>
</reference>
<reference key="14">
    <citation type="journal article" date="2005" name="Acta Biochim. Pol.">
        <title>The Obg subfamily of bacterial GTP-binding proteins: essential proteins of largely unknown functions that are evolutionarily conserved from bacteria to humans.</title>
        <authorList>
            <person name="Czyz A."/>
            <person name="Wegrzyn G."/>
        </authorList>
    </citation>
    <scope>REVIEW</scope>
</reference>
<reference key="15">
    <citation type="journal article" date="2005" name="Dev. Cell">
        <title>Obg/CtgA, a signaling protein that controls replication, translation, and morphological development?</title>
        <authorList>
            <person name="Michel B."/>
        </authorList>
    </citation>
    <scope>REVIEW</scope>
</reference>
<sequence length="428" mass="47689">MFVDQVKVYVKGGDGGNGMVAFRREKYVPKGGPAGGDGGKGGDVVFEVDEGLRTLMDFRYKKHFKAIRGEHGMSKNQHGRNADDMVIKVPPGTVVTDDDTKQVIADLTEHGQRAVIARGGRGGRGNSRFATPANPAPQLSENGEPGKERYIVLELKVLADVGLVGFPSVGKSTLLSVVSSAKPKIADYHFTTLVPNLGMVETDDGRSFVMADLPGLIEGAHQGVGLGHQFLRHIERTRVIVHVIDMSGLEGRDPYDDYLTINQELSEYNLRLTERPQIIVANKMDMPEAAENLEAFKEKLTDDYPVFPISAVTREGLRELLFEVANQLENTPEFPLYDEEELTQNRVMYTMENEEVPFNITRDPDGVFVLSGDSLERLFKMTDFSRDESVKRFARQMRGMGVDEALRERGAKDGDIIRLLEFEFEFID</sequence>
<evidence type="ECO:0000255" key="1">
    <source>
        <dbReference type="HAMAP-Rule" id="MF_01454"/>
    </source>
</evidence>
<evidence type="ECO:0000255" key="2">
    <source>
        <dbReference type="PROSITE-ProRule" id="PRU01229"/>
    </source>
</evidence>
<evidence type="ECO:0000255" key="3">
    <source>
        <dbReference type="PROSITE-ProRule" id="PRU01231"/>
    </source>
</evidence>
<evidence type="ECO:0000256" key="4">
    <source>
        <dbReference type="SAM" id="MobiDB-lite"/>
    </source>
</evidence>
<evidence type="ECO:0000269" key="5">
    <source>
    </source>
</evidence>
<evidence type="ECO:0000269" key="6">
    <source>
    </source>
</evidence>
<evidence type="ECO:0000269" key="7">
    <source>
    </source>
</evidence>
<evidence type="ECO:0000269" key="8">
    <source>
    </source>
</evidence>
<evidence type="ECO:0000269" key="9">
    <source>
    </source>
</evidence>
<evidence type="ECO:0000269" key="10">
    <source>
    </source>
</evidence>
<evidence type="ECO:0000269" key="11">
    <source>
    </source>
</evidence>
<evidence type="ECO:0000269" key="12">
    <source>
    </source>
</evidence>
<evidence type="ECO:0000269" key="13">
    <source>
    </source>
</evidence>
<evidence type="ECO:0000269" key="14">
    <source>
    </source>
</evidence>
<evidence type="ECO:0000303" key="15">
    <source>
    </source>
</evidence>
<evidence type="ECO:0000305" key="16">
    <source>
    </source>
</evidence>
<evidence type="ECO:0007829" key="17">
    <source>
        <dbReference type="PDB" id="1LNZ"/>
    </source>
</evidence>
<feature type="chain" id="PRO_0000205432" description="GTPase Obg">
    <location>
        <begin position="1"/>
        <end position="428"/>
    </location>
</feature>
<feature type="domain" description="Obg" evidence="3">
    <location>
        <begin position="1"/>
        <end position="158"/>
    </location>
</feature>
<feature type="domain" description="OBG-type G" evidence="1">
    <location>
        <begin position="159"/>
        <end position="329"/>
    </location>
</feature>
<feature type="domain" description="OCT" evidence="2">
    <location>
        <begin position="350"/>
        <end position="428"/>
    </location>
</feature>
<feature type="region of interest" description="Disordered" evidence="4">
    <location>
        <begin position="117"/>
        <end position="143"/>
    </location>
</feature>
<feature type="binding site" evidence="1">
    <location>
        <begin position="165"/>
        <end position="172"/>
    </location>
    <ligand>
        <name>GTP</name>
        <dbReference type="ChEBI" id="CHEBI:37565"/>
    </ligand>
</feature>
<feature type="binding site" evidence="1">
    <location>
        <position position="172"/>
    </location>
    <ligand>
        <name>Mg(2+)</name>
        <dbReference type="ChEBI" id="CHEBI:18420"/>
    </ligand>
</feature>
<feature type="binding site" evidence="1">
    <location>
        <begin position="190"/>
        <end position="194"/>
    </location>
    <ligand>
        <name>GTP</name>
        <dbReference type="ChEBI" id="CHEBI:37565"/>
    </ligand>
</feature>
<feature type="binding site" evidence="1">
    <location>
        <position position="192"/>
    </location>
    <ligand>
        <name>Mg(2+)</name>
        <dbReference type="ChEBI" id="CHEBI:18420"/>
    </ligand>
</feature>
<feature type="binding site" evidence="1">
    <location>
        <begin position="212"/>
        <end position="215"/>
    </location>
    <ligand>
        <name>GTP</name>
        <dbReference type="ChEBI" id="CHEBI:37565"/>
    </ligand>
</feature>
<feature type="binding site" evidence="1">
    <location>
        <begin position="282"/>
        <end position="285"/>
    </location>
    <ligand>
        <name>GTP</name>
        <dbReference type="ChEBI" id="CHEBI:37565"/>
    </ligand>
</feature>
<feature type="binding site" evidence="1">
    <location>
        <begin position="310"/>
        <end position="312"/>
    </location>
    <ligand>
        <name>GTP</name>
        <dbReference type="ChEBI" id="CHEBI:37565"/>
    </ligand>
</feature>
<feature type="mutagenesis site" description="Stops growing at 45 degrees Celsius, shows sporulation onset defects. KM for GTP is 2.3 uM, turnover number is 0.015/min." evidence="13">
    <original>GRNADD</original>
    <variation>ERNADN</variation>
    <location>
        <begin position="79"/>
        <end position="84"/>
    </location>
</feature>
<feature type="mutagenesis site" description="Grows slowly, very reduced association with ribosomes, fewer 70S ribosomes in cells. No effect on sporulation or the general stress response." evidence="10">
    <original>G</original>
    <variation>D</variation>
    <location>
        <position position="92"/>
    </location>
</feature>
<feature type="mutagenesis site" description="No effect on growth or ribosomes, eliminates sporulation onset. Also decreases the general stress response to physical stress." evidence="10">
    <original>RERGAKDGDIIRLLEFEFEFID</original>
    <variation>SCRRASRIPAHWRPLLVDPSSVPSLA</variation>
    <location>
        <begin position="407"/>
        <end position="428"/>
    </location>
</feature>
<feature type="strand" evidence="17">
    <location>
        <begin position="2"/>
        <end position="11"/>
    </location>
</feature>
<feature type="strand" evidence="17">
    <location>
        <begin position="26"/>
        <end position="28"/>
    </location>
</feature>
<feature type="strand" evidence="17">
    <location>
        <begin position="44"/>
        <end position="48"/>
    </location>
</feature>
<feature type="helix" evidence="17">
    <location>
        <begin position="57"/>
        <end position="59"/>
    </location>
</feature>
<feature type="strand" evidence="17">
    <location>
        <begin position="63"/>
        <end position="65"/>
    </location>
</feature>
<feature type="strand" evidence="17">
    <location>
        <begin position="85"/>
        <end position="89"/>
    </location>
</feature>
<feature type="strand" evidence="17">
    <location>
        <begin position="93"/>
        <end position="97"/>
    </location>
</feature>
<feature type="turn" evidence="17">
    <location>
        <begin position="98"/>
        <end position="100"/>
    </location>
</feature>
<feature type="strand" evidence="17">
    <location>
        <begin position="103"/>
        <end position="107"/>
    </location>
</feature>
<feature type="strand" evidence="17">
    <location>
        <begin position="113"/>
        <end position="117"/>
    </location>
</feature>
<feature type="helix" evidence="17">
    <location>
        <begin position="126"/>
        <end position="128"/>
    </location>
</feature>
<feature type="strand" evidence="17">
    <location>
        <begin position="134"/>
        <end position="136"/>
    </location>
</feature>
<feature type="strand" evidence="17">
    <location>
        <begin position="148"/>
        <end position="156"/>
    </location>
</feature>
<feature type="strand" evidence="17">
    <location>
        <begin position="161"/>
        <end position="166"/>
    </location>
</feature>
<feature type="helix" evidence="17">
    <location>
        <begin position="171"/>
        <end position="177"/>
    </location>
</feature>
<feature type="strand" evidence="17">
    <location>
        <begin position="178"/>
        <end position="181"/>
    </location>
</feature>
<feature type="strand" evidence="17">
    <location>
        <begin position="184"/>
        <end position="187"/>
    </location>
</feature>
<feature type="strand" evidence="17">
    <location>
        <begin position="197"/>
        <end position="201"/>
    </location>
</feature>
<feature type="strand" evidence="17">
    <location>
        <begin position="203"/>
        <end position="205"/>
    </location>
</feature>
<feature type="strand" evidence="17">
    <location>
        <begin position="207"/>
        <end position="212"/>
    </location>
</feature>
<feature type="helix" evidence="17">
    <location>
        <begin position="213"/>
        <end position="219"/>
    </location>
</feature>
<feature type="turn" evidence="17">
    <location>
        <begin position="223"/>
        <end position="226"/>
    </location>
</feature>
<feature type="helix" evidence="17">
    <location>
        <begin position="227"/>
        <end position="236"/>
    </location>
</feature>
<feature type="strand" evidence="17">
    <location>
        <begin position="239"/>
        <end position="247"/>
    </location>
</feature>
<feature type="helix" evidence="17">
    <location>
        <begin position="254"/>
        <end position="267"/>
    </location>
</feature>
<feature type="turn" evidence="17">
    <location>
        <begin position="272"/>
        <end position="274"/>
    </location>
</feature>
<feature type="strand" evidence="17">
    <location>
        <begin position="279"/>
        <end position="282"/>
    </location>
</feature>
<feature type="helix" evidence="17">
    <location>
        <begin position="289"/>
        <end position="299"/>
    </location>
</feature>
<feature type="helix" evidence="17">
    <location>
        <begin position="318"/>
        <end position="328"/>
    </location>
</feature>